<dbReference type="EC" id="4.1.1.130" evidence="1"/>
<dbReference type="EMBL" id="AM270251">
    <property type="protein sequence ID" value="CAK97077.1"/>
    <property type="molecule type" value="Genomic_DNA"/>
</dbReference>
<dbReference type="RefSeq" id="XP_001394951.1">
    <property type="nucleotide sequence ID" value="XM_001394914.1"/>
</dbReference>
<dbReference type="SMR" id="A5ABP2"/>
<dbReference type="EnsemblFungi" id="CAK97077">
    <property type="protein sequence ID" value="CAK97077"/>
    <property type="gene ID" value="An11g09930"/>
</dbReference>
<dbReference type="GeneID" id="4985210"/>
<dbReference type="KEGG" id="ang:An11g09930"/>
<dbReference type="VEuPathDB" id="FungiDB:An11g09930"/>
<dbReference type="HOGENOM" id="CLU_061241_0_0_1"/>
<dbReference type="UniPathway" id="UPA00232"/>
<dbReference type="Proteomes" id="UP000006706">
    <property type="component" value="Chromosome 7R"/>
</dbReference>
<dbReference type="GO" id="GO:0031314">
    <property type="term" value="C:extrinsic component of mitochondrial inner membrane"/>
    <property type="evidence" value="ECO:0007669"/>
    <property type="project" value="UniProtKB-UniRule"/>
</dbReference>
<dbReference type="GO" id="GO:0006744">
    <property type="term" value="P:ubiquinone biosynthetic process"/>
    <property type="evidence" value="ECO:0007669"/>
    <property type="project" value="UniProtKB-UniRule"/>
</dbReference>
<dbReference type="HAMAP" id="MF_03111">
    <property type="entry name" value="Coq4"/>
    <property type="match status" value="1"/>
</dbReference>
<dbReference type="InterPro" id="IPR007715">
    <property type="entry name" value="Coq4"/>
</dbReference>
<dbReference type="InterPro" id="IPR027540">
    <property type="entry name" value="Coq4_euk"/>
</dbReference>
<dbReference type="PANTHER" id="PTHR12922">
    <property type="entry name" value="UBIQUINONE BIOSYNTHESIS PROTEIN"/>
    <property type="match status" value="1"/>
</dbReference>
<dbReference type="PANTHER" id="PTHR12922:SF7">
    <property type="entry name" value="UBIQUINONE BIOSYNTHESIS PROTEIN COQ4 HOMOLOG, MITOCHONDRIAL"/>
    <property type="match status" value="1"/>
</dbReference>
<dbReference type="Pfam" id="PF05019">
    <property type="entry name" value="Coq4"/>
    <property type="match status" value="1"/>
</dbReference>
<gene>
    <name type="primary">coq4</name>
    <name type="ORF">An11g09930</name>
</gene>
<feature type="transit peptide" description="Mitochondrion" evidence="1">
    <location>
        <begin position="1"/>
        <end position="7"/>
    </location>
</feature>
<feature type="chain" id="PRO_0000388098" description="Ubiquinone biosynthesis protein coq4, mitochondrial">
    <location>
        <begin position="8"/>
        <end position="290"/>
    </location>
</feature>
<feature type="binding site" evidence="1">
    <location>
        <position position="171"/>
    </location>
    <ligand>
        <name>Zn(2+)</name>
        <dbReference type="ChEBI" id="CHEBI:29105"/>
    </ligand>
</feature>
<feature type="binding site" evidence="1">
    <location>
        <position position="172"/>
    </location>
    <ligand>
        <name>Zn(2+)</name>
        <dbReference type="ChEBI" id="CHEBI:29105"/>
    </ligand>
</feature>
<feature type="binding site" evidence="1">
    <location>
        <position position="175"/>
    </location>
    <ligand>
        <name>Zn(2+)</name>
        <dbReference type="ChEBI" id="CHEBI:29105"/>
    </ligand>
</feature>
<feature type="binding site" evidence="1">
    <location>
        <position position="187"/>
    </location>
    <ligand>
        <name>Zn(2+)</name>
        <dbReference type="ChEBI" id="CHEBI:29105"/>
    </ligand>
</feature>
<accession>A5ABP2</accession>
<reference key="1">
    <citation type="journal article" date="2007" name="Nat. Biotechnol.">
        <title>Genome sequencing and analysis of the versatile cell factory Aspergillus niger CBS 513.88.</title>
        <authorList>
            <person name="Pel H.J."/>
            <person name="de Winde J.H."/>
            <person name="Archer D.B."/>
            <person name="Dyer P.S."/>
            <person name="Hofmann G."/>
            <person name="Schaap P.J."/>
            <person name="Turner G."/>
            <person name="de Vries R.P."/>
            <person name="Albang R."/>
            <person name="Albermann K."/>
            <person name="Andersen M.R."/>
            <person name="Bendtsen J.D."/>
            <person name="Benen J.A.E."/>
            <person name="van den Berg M."/>
            <person name="Breestraat S."/>
            <person name="Caddick M.X."/>
            <person name="Contreras R."/>
            <person name="Cornell M."/>
            <person name="Coutinho P.M."/>
            <person name="Danchin E.G.J."/>
            <person name="Debets A.J.M."/>
            <person name="Dekker P."/>
            <person name="van Dijck P.W.M."/>
            <person name="van Dijk A."/>
            <person name="Dijkhuizen L."/>
            <person name="Driessen A.J.M."/>
            <person name="d'Enfert C."/>
            <person name="Geysens S."/>
            <person name="Goosen C."/>
            <person name="Groot G.S.P."/>
            <person name="de Groot P.W.J."/>
            <person name="Guillemette T."/>
            <person name="Henrissat B."/>
            <person name="Herweijer M."/>
            <person name="van den Hombergh J.P.T.W."/>
            <person name="van den Hondel C.A.M.J.J."/>
            <person name="van der Heijden R.T.J.M."/>
            <person name="van der Kaaij R.M."/>
            <person name="Klis F.M."/>
            <person name="Kools H.J."/>
            <person name="Kubicek C.P."/>
            <person name="van Kuyk P.A."/>
            <person name="Lauber J."/>
            <person name="Lu X."/>
            <person name="van der Maarel M.J.E.C."/>
            <person name="Meulenberg R."/>
            <person name="Menke H."/>
            <person name="Mortimer M.A."/>
            <person name="Nielsen J."/>
            <person name="Oliver S.G."/>
            <person name="Olsthoorn M."/>
            <person name="Pal K."/>
            <person name="van Peij N.N.M.E."/>
            <person name="Ram A.F.J."/>
            <person name="Rinas U."/>
            <person name="Roubos J.A."/>
            <person name="Sagt C.M.J."/>
            <person name="Schmoll M."/>
            <person name="Sun J."/>
            <person name="Ussery D."/>
            <person name="Varga J."/>
            <person name="Vervecken W."/>
            <person name="van de Vondervoort P.J.J."/>
            <person name="Wedler H."/>
            <person name="Woesten H.A.B."/>
            <person name="Zeng A.-P."/>
            <person name="van Ooyen A.J.J."/>
            <person name="Visser J."/>
            <person name="Stam H."/>
        </authorList>
    </citation>
    <scope>NUCLEOTIDE SEQUENCE [LARGE SCALE GENOMIC DNA]</scope>
    <source>
        <strain>ATCC MYA-4892 / CBS 513.88 / FGSC A1513</strain>
    </source>
</reference>
<sequence>MTVLRTRSAVQHARELNNFLSCAAPLSLRSHSRPISGFNRPPPNYPGHVPLNFVERGALAVGSAVGALLNPRRADLIAACGEATATPYFIYRLRDAMLSDPTGRQILRDRPRITSETLKLPYLRSLPENTVGRTYATWLDREGVSPDTRDNVQYIDDEECAYVMQRYRECHDFYHAVTGLPIFVEGELALKAFEFLNTLIPMTGLSLFASVRLKPAERERLFSIYLPWALRSGLRSKELINVYWEKVLEKDVGELREELGIERPPDMREIRRMIRMQKKREKELMEQRGQ</sequence>
<organism>
    <name type="scientific">Aspergillus niger (strain ATCC MYA-4892 / CBS 513.88 / FGSC A1513)</name>
    <dbReference type="NCBI Taxonomy" id="425011"/>
    <lineage>
        <taxon>Eukaryota</taxon>
        <taxon>Fungi</taxon>
        <taxon>Dikarya</taxon>
        <taxon>Ascomycota</taxon>
        <taxon>Pezizomycotina</taxon>
        <taxon>Eurotiomycetes</taxon>
        <taxon>Eurotiomycetidae</taxon>
        <taxon>Eurotiales</taxon>
        <taxon>Aspergillaceae</taxon>
        <taxon>Aspergillus</taxon>
        <taxon>Aspergillus subgen. Circumdati</taxon>
    </lineage>
</organism>
<protein>
    <recommendedName>
        <fullName evidence="1">Ubiquinone biosynthesis protein coq4, mitochondrial</fullName>
    </recommendedName>
    <alternativeName>
        <fullName>4-hydroxy-3-methoxy-5-polyprenylbenzoate decarboxylase</fullName>
        <ecNumber evidence="1">4.1.1.130</ecNumber>
    </alternativeName>
    <alternativeName>
        <fullName evidence="1">Coenzyme Q biosynthesis protein 4</fullName>
    </alternativeName>
</protein>
<comment type="function">
    <text evidence="1">Lyase that catalyzes the C1-decarboxylation of 4-hydroxy-3-methoxy-5-(all-trans-polyprenyl)benzoic acid into 2-methoxy-6-(all-trans-polyprenyl)phenol during ubiquinone biosynthesis.</text>
</comment>
<comment type="catalytic activity">
    <reaction evidence="1">
        <text>a 4-hydroxy-3-methoxy-5-(all-trans-polyprenyl)benzoate + H(+) = a 2-methoxy-6-(all-trans-polyprenyl)phenol + CO2</text>
        <dbReference type="Rhea" id="RHEA:81179"/>
        <dbReference type="Rhea" id="RHEA-COMP:9551"/>
        <dbReference type="Rhea" id="RHEA-COMP:10931"/>
        <dbReference type="ChEBI" id="CHEBI:15378"/>
        <dbReference type="ChEBI" id="CHEBI:16526"/>
        <dbReference type="ChEBI" id="CHEBI:62731"/>
        <dbReference type="ChEBI" id="CHEBI:84443"/>
        <dbReference type="EC" id="4.1.1.130"/>
    </reaction>
</comment>
<comment type="cofactor">
    <cofactor evidence="1">
        <name>Zn(2+)</name>
        <dbReference type="ChEBI" id="CHEBI:29105"/>
    </cofactor>
</comment>
<comment type="pathway">
    <text evidence="1">Cofactor biosynthesis; ubiquinone biosynthesis.</text>
</comment>
<comment type="subunit">
    <text evidence="1">Component of a multi-subunit COQ enzyme complex, composed of at least coq3, coq4, coq5, coq6, coq7 and coq9.</text>
</comment>
<comment type="subcellular location">
    <subcellularLocation>
        <location evidence="1">Mitochondrion inner membrane</location>
        <topology evidence="1">Peripheral membrane protein</topology>
        <orientation evidence="1">Matrix side</orientation>
    </subcellularLocation>
</comment>
<comment type="similarity">
    <text evidence="1">Belongs to the COQ4 family.</text>
</comment>
<proteinExistence type="inferred from homology"/>
<keyword id="KW-0456">Lyase</keyword>
<keyword id="KW-0472">Membrane</keyword>
<keyword id="KW-0479">Metal-binding</keyword>
<keyword id="KW-0496">Mitochondrion</keyword>
<keyword id="KW-0999">Mitochondrion inner membrane</keyword>
<keyword id="KW-1185">Reference proteome</keyword>
<keyword id="KW-0809">Transit peptide</keyword>
<keyword id="KW-0831">Ubiquinone biosynthesis</keyword>
<keyword id="KW-0862">Zinc</keyword>
<name>COQ4_ASPNC</name>
<evidence type="ECO:0000255" key="1">
    <source>
        <dbReference type="HAMAP-Rule" id="MF_03111"/>
    </source>
</evidence>